<accession>Q5NEE1</accession>
<organism>
    <name type="scientific">Francisella tularensis subsp. tularensis (strain SCHU S4 / Schu 4)</name>
    <dbReference type="NCBI Taxonomy" id="177416"/>
    <lineage>
        <taxon>Bacteria</taxon>
        <taxon>Pseudomonadati</taxon>
        <taxon>Pseudomonadota</taxon>
        <taxon>Gammaproteobacteria</taxon>
        <taxon>Thiotrichales</taxon>
        <taxon>Francisellaceae</taxon>
        <taxon>Francisella</taxon>
    </lineage>
</organism>
<keyword id="KW-0067">ATP-binding</keyword>
<keyword id="KW-0143">Chaperone</keyword>
<keyword id="KW-0963">Cytoplasm</keyword>
<keyword id="KW-0903">Direct protein sequencing</keyword>
<keyword id="KW-0413">Isomerase</keyword>
<keyword id="KW-0547">Nucleotide-binding</keyword>
<keyword id="KW-1185">Reference proteome</keyword>
<reference key="1">
    <citation type="journal article" date="2006" name="Infect. Immun.">
        <title>Identification, recombinant expression, immunolocalization in macrophages, and T-cell responsiveness of the major extracellular proteins of Francisella tularensis.</title>
        <authorList>
            <person name="Lee B.-Y."/>
            <person name="Horwitz M.A."/>
            <person name="Clemens D.L."/>
        </authorList>
    </citation>
    <scope>NUCLEOTIDE SEQUENCE [GENOMIC DNA]</scope>
    <scope>PROTEIN SEQUENCE OF 2-13</scope>
    <scope>SUBCELLULAR LOCATION</scope>
    <source>
        <strain>NY 96-3369</strain>
    </source>
</reference>
<reference key="2">
    <citation type="journal article" date="2005" name="Nat. Genet.">
        <title>The complete genome sequence of Francisella tularensis, the causative agent of tularemia.</title>
        <authorList>
            <person name="Larsson P."/>
            <person name="Oyston P.C.F."/>
            <person name="Chain P."/>
            <person name="Chu M.C."/>
            <person name="Duffield M."/>
            <person name="Fuxelius H.-H."/>
            <person name="Garcia E."/>
            <person name="Haelltorp G."/>
            <person name="Johansson D."/>
            <person name="Isherwood K.E."/>
            <person name="Karp P.D."/>
            <person name="Larsson E."/>
            <person name="Liu Y."/>
            <person name="Michell S."/>
            <person name="Prior J."/>
            <person name="Prior R."/>
            <person name="Malfatti S."/>
            <person name="Sjoestedt A."/>
            <person name="Svensson K."/>
            <person name="Thompson N."/>
            <person name="Vergez L."/>
            <person name="Wagg J.K."/>
            <person name="Wren B.W."/>
            <person name="Lindler L.E."/>
            <person name="Andersson S.G.E."/>
            <person name="Forsman M."/>
            <person name="Titball R.W."/>
        </authorList>
    </citation>
    <scope>NUCLEOTIDE SEQUENCE [LARGE SCALE GENOMIC DNA]</scope>
    <source>
        <strain>SCHU S4 / Schu 4</strain>
    </source>
</reference>
<evidence type="ECO:0000255" key="1">
    <source>
        <dbReference type="HAMAP-Rule" id="MF_00600"/>
    </source>
</evidence>
<evidence type="ECO:0000269" key="2">
    <source>
    </source>
</evidence>
<feature type="initiator methionine" description="Removed" evidence="2">
    <location>
        <position position="1"/>
    </location>
</feature>
<feature type="chain" id="PRO_0000332001" description="Chaperonin GroEL">
    <location>
        <begin position="2"/>
        <end position="544"/>
    </location>
</feature>
<feature type="binding site" evidence="1">
    <location>
        <begin position="30"/>
        <end position="33"/>
    </location>
    <ligand>
        <name>ATP</name>
        <dbReference type="ChEBI" id="CHEBI:30616"/>
    </ligand>
</feature>
<feature type="binding site" evidence="1">
    <location>
        <position position="51"/>
    </location>
    <ligand>
        <name>ATP</name>
        <dbReference type="ChEBI" id="CHEBI:30616"/>
    </ligand>
</feature>
<feature type="binding site" evidence="1">
    <location>
        <begin position="87"/>
        <end position="91"/>
    </location>
    <ligand>
        <name>ATP</name>
        <dbReference type="ChEBI" id="CHEBI:30616"/>
    </ligand>
</feature>
<feature type="binding site" evidence="1">
    <location>
        <position position="415"/>
    </location>
    <ligand>
        <name>ATP</name>
        <dbReference type="ChEBI" id="CHEBI:30616"/>
    </ligand>
</feature>
<feature type="binding site" evidence="1">
    <location>
        <begin position="479"/>
        <end position="481"/>
    </location>
    <ligand>
        <name>ATP</name>
        <dbReference type="ChEBI" id="CHEBI:30616"/>
    </ligand>
</feature>
<feature type="binding site" evidence="1">
    <location>
        <position position="495"/>
    </location>
    <ligand>
        <name>ATP</name>
        <dbReference type="ChEBI" id="CHEBI:30616"/>
    </ligand>
</feature>
<sequence>MAAKQVLFSDEARAKMLDGVNTLANAVKVTLGPKGRNVVLDKSFGTPTITKDGVSVAKEIELEDKFENMGAQIVKEVASKTADVAGDGTTTATVLAQALLTEGLKAVAAGMNPMDLKRGIDKATARLVEELKALSKPCSDPKSIEQVGTISANSDATVGKLIADAMAKVGKEGVITVEEGKGFEDELDVVEGMQFDRGYLSPYFATNQENMTTDLENPYILIVDKKISNIRDLLPILEGVSKSGRALLIIAEDVESEALATLVVNNMRGVVKVCAVKAPGFGDRRKAMLEDIATLTGATFVSEDLSMKLEETNMEHLGTASRVQVTKDNTTIIDGAGEKEAIAKRINVIKANIAEANSDYDREKLQERLAKLSGGVAVIKVGAVTEAEMKEKKDRVDDALHATRAAVEEGIVAGGGVALIRAQKALDGLTGENDDQNYGIALLRKAIEAPLRQIVSNAGGESSVVVNQVKANQGNYGYNAANDTYGDMVEMGILDPTKVTRSALQHAASIAGLMITTEAMIGEIKEAAPAMPMGGGMGGMPGMM</sequence>
<proteinExistence type="evidence at protein level"/>
<dbReference type="EC" id="5.6.1.7" evidence="1"/>
<dbReference type="EMBL" id="AY662300">
    <property type="protein sequence ID" value="AAT77113.1"/>
    <property type="molecule type" value="Genomic_DNA"/>
</dbReference>
<dbReference type="EMBL" id="AJ749949">
    <property type="protein sequence ID" value="CAG46329.1"/>
    <property type="molecule type" value="Genomic_DNA"/>
</dbReference>
<dbReference type="RefSeq" id="WP_003022663.1">
    <property type="nucleotide sequence ID" value="NC_006570.2"/>
</dbReference>
<dbReference type="RefSeq" id="YP_170601.1">
    <property type="nucleotide sequence ID" value="NC_006570.2"/>
</dbReference>
<dbReference type="SMR" id="Q5NEE1"/>
<dbReference type="IntAct" id="Q5NEE1">
    <property type="interactions" value="4"/>
</dbReference>
<dbReference type="STRING" id="177416.FTT_1696"/>
<dbReference type="ABCD" id="Q5NEE1">
    <property type="antibodies" value="2 sequenced antibodies"/>
</dbReference>
<dbReference type="DNASU" id="3191101"/>
<dbReference type="EnsemblBacteria" id="CAG46329">
    <property type="protein sequence ID" value="CAG46329"/>
    <property type="gene ID" value="FTT_1696"/>
</dbReference>
<dbReference type="KEGG" id="ftu:FTT_1696"/>
<dbReference type="eggNOG" id="COG0459">
    <property type="taxonomic scope" value="Bacteria"/>
</dbReference>
<dbReference type="OrthoDB" id="9766614at2"/>
<dbReference type="Proteomes" id="UP000001174">
    <property type="component" value="Chromosome"/>
</dbReference>
<dbReference type="GO" id="GO:0005737">
    <property type="term" value="C:cytoplasm"/>
    <property type="evidence" value="ECO:0007669"/>
    <property type="project" value="UniProtKB-SubCell"/>
</dbReference>
<dbReference type="GO" id="GO:0005524">
    <property type="term" value="F:ATP binding"/>
    <property type="evidence" value="ECO:0007669"/>
    <property type="project" value="UniProtKB-UniRule"/>
</dbReference>
<dbReference type="GO" id="GO:0140662">
    <property type="term" value="F:ATP-dependent protein folding chaperone"/>
    <property type="evidence" value="ECO:0007669"/>
    <property type="project" value="InterPro"/>
</dbReference>
<dbReference type="GO" id="GO:0016853">
    <property type="term" value="F:isomerase activity"/>
    <property type="evidence" value="ECO:0007669"/>
    <property type="project" value="UniProtKB-KW"/>
</dbReference>
<dbReference type="GO" id="GO:0051082">
    <property type="term" value="F:unfolded protein binding"/>
    <property type="evidence" value="ECO:0007669"/>
    <property type="project" value="UniProtKB-UniRule"/>
</dbReference>
<dbReference type="GO" id="GO:0042026">
    <property type="term" value="P:protein refolding"/>
    <property type="evidence" value="ECO:0007669"/>
    <property type="project" value="UniProtKB-UniRule"/>
</dbReference>
<dbReference type="CDD" id="cd03344">
    <property type="entry name" value="GroEL"/>
    <property type="match status" value="1"/>
</dbReference>
<dbReference type="FunFam" id="1.10.560.10:FF:000001">
    <property type="entry name" value="60 kDa chaperonin"/>
    <property type="match status" value="1"/>
</dbReference>
<dbReference type="FunFam" id="3.50.7.10:FF:000001">
    <property type="entry name" value="60 kDa chaperonin"/>
    <property type="match status" value="1"/>
</dbReference>
<dbReference type="Gene3D" id="3.50.7.10">
    <property type="entry name" value="GroEL"/>
    <property type="match status" value="1"/>
</dbReference>
<dbReference type="Gene3D" id="1.10.560.10">
    <property type="entry name" value="GroEL-like equatorial domain"/>
    <property type="match status" value="1"/>
</dbReference>
<dbReference type="Gene3D" id="3.30.260.10">
    <property type="entry name" value="TCP-1-like chaperonin intermediate domain"/>
    <property type="match status" value="1"/>
</dbReference>
<dbReference type="HAMAP" id="MF_00600">
    <property type="entry name" value="CH60"/>
    <property type="match status" value="1"/>
</dbReference>
<dbReference type="InterPro" id="IPR018370">
    <property type="entry name" value="Chaperonin_Cpn60_CS"/>
</dbReference>
<dbReference type="InterPro" id="IPR001844">
    <property type="entry name" value="Cpn60/GroEL"/>
</dbReference>
<dbReference type="InterPro" id="IPR002423">
    <property type="entry name" value="Cpn60/GroEL/TCP-1"/>
</dbReference>
<dbReference type="InterPro" id="IPR027409">
    <property type="entry name" value="GroEL-like_apical_dom_sf"/>
</dbReference>
<dbReference type="InterPro" id="IPR027413">
    <property type="entry name" value="GROEL-like_equatorial_sf"/>
</dbReference>
<dbReference type="InterPro" id="IPR027410">
    <property type="entry name" value="TCP-1-like_intermed_sf"/>
</dbReference>
<dbReference type="NCBIfam" id="TIGR02348">
    <property type="entry name" value="GroEL"/>
    <property type="match status" value="1"/>
</dbReference>
<dbReference type="NCBIfam" id="NF000592">
    <property type="entry name" value="PRK00013.1"/>
    <property type="match status" value="1"/>
</dbReference>
<dbReference type="NCBIfam" id="NF009487">
    <property type="entry name" value="PRK12849.1"/>
    <property type="match status" value="1"/>
</dbReference>
<dbReference type="NCBIfam" id="NF009488">
    <property type="entry name" value="PRK12850.1"/>
    <property type="match status" value="1"/>
</dbReference>
<dbReference type="NCBIfam" id="NF009489">
    <property type="entry name" value="PRK12851.1"/>
    <property type="match status" value="1"/>
</dbReference>
<dbReference type="PANTHER" id="PTHR45633">
    <property type="entry name" value="60 KDA HEAT SHOCK PROTEIN, MITOCHONDRIAL"/>
    <property type="match status" value="1"/>
</dbReference>
<dbReference type="Pfam" id="PF00118">
    <property type="entry name" value="Cpn60_TCP1"/>
    <property type="match status" value="1"/>
</dbReference>
<dbReference type="PRINTS" id="PR00298">
    <property type="entry name" value="CHAPERONIN60"/>
</dbReference>
<dbReference type="SUPFAM" id="SSF52029">
    <property type="entry name" value="GroEL apical domain-like"/>
    <property type="match status" value="1"/>
</dbReference>
<dbReference type="SUPFAM" id="SSF48592">
    <property type="entry name" value="GroEL equatorial domain-like"/>
    <property type="match status" value="1"/>
</dbReference>
<dbReference type="SUPFAM" id="SSF54849">
    <property type="entry name" value="GroEL-intermediate domain like"/>
    <property type="match status" value="1"/>
</dbReference>
<dbReference type="PROSITE" id="PS00296">
    <property type="entry name" value="CHAPERONINS_CPN60"/>
    <property type="match status" value="1"/>
</dbReference>
<name>CH60_FRATT</name>
<gene>
    <name evidence="1" type="primary">groEL</name>
    <name evidence="1" type="synonym">groL</name>
    <name type="ordered locus">FTT_1696</name>
</gene>
<protein>
    <recommendedName>
        <fullName evidence="1">Chaperonin GroEL</fullName>
        <ecNumber evidence="1">5.6.1.7</ecNumber>
    </recommendedName>
    <alternativeName>
        <fullName evidence="1">60 kDa chaperonin</fullName>
    </alternativeName>
    <alternativeName>
        <fullName evidence="1">Chaperonin-60</fullName>
        <shortName evidence="1">Cpn60</shortName>
    </alternativeName>
</protein>
<comment type="function">
    <text evidence="1">Together with its co-chaperonin GroES, plays an essential role in assisting protein folding. The GroEL-GroES system forms a nano-cage that allows encapsulation of the non-native substrate proteins and provides a physical environment optimized to promote and accelerate protein folding.</text>
</comment>
<comment type="catalytic activity">
    <reaction evidence="1">
        <text>ATP + H2O + a folded polypeptide = ADP + phosphate + an unfolded polypeptide.</text>
        <dbReference type="EC" id="5.6.1.7"/>
    </reaction>
</comment>
<comment type="subunit">
    <text evidence="1">Forms a cylinder of 14 subunits composed of two heptameric rings stacked back-to-back. Interacts with the co-chaperonin GroES.</text>
</comment>
<comment type="subcellular location">
    <subcellularLocation>
        <location evidence="1">Cytoplasm</location>
    </subcellularLocation>
    <text evidence="2">Released into the host cell cytosol during infection.</text>
</comment>
<comment type="similarity">
    <text evidence="1">Belongs to the chaperonin (HSP60) family.</text>
</comment>